<keyword id="KW-0010">Activator</keyword>
<keyword id="KW-0963">Cytoplasm</keyword>
<keyword id="KW-0238">DNA-binding</keyword>
<keyword id="KW-0276">Fatty acid metabolism</keyword>
<keyword id="KW-0443">Lipid metabolism</keyword>
<keyword id="KW-0678">Repressor</keyword>
<keyword id="KW-0804">Transcription</keyword>
<keyword id="KW-0805">Transcription regulation</keyword>
<gene>
    <name evidence="1" type="primary">fadR</name>
    <name type="ordered locus">Sbal195_1815</name>
</gene>
<comment type="function">
    <text evidence="1">Multifunctional regulator of fatty acid metabolism.</text>
</comment>
<comment type="subunit">
    <text evidence="1">Homodimer.</text>
</comment>
<comment type="subcellular location">
    <subcellularLocation>
        <location evidence="1">Cytoplasm</location>
    </subcellularLocation>
</comment>
<evidence type="ECO:0000255" key="1">
    <source>
        <dbReference type="HAMAP-Rule" id="MF_00696"/>
    </source>
</evidence>
<proteinExistence type="inferred from homology"/>
<name>FADR_SHEB9</name>
<feature type="chain" id="PRO_1000083187" description="Fatty acid metabolism regulator protein">
    <location>
        <begin position="1"/>
        <end position="238"/>
    </location>
</feature>
<feature type="domain" description="HTH gntR-type" evidence="1">
    <location>
        <begin position="6"/>
        <end position="74"/>
    </location>
</feature>
<feature type="DNA-binding region" description="H-T-H motif" evidence="1">
    <location>
        <begin position="34"/>
        <end position="53"/>
    </location>
</feature>
<dbReference type="EMBL" id="CP000891">
    <property type="protein sequence ID" value="ABX48986.1"/>
    <property type="molecule type" value="Genomic_DNA"/>
</dbReference>
<dbReference type="RefSeq" id="WP_006081284.1">
    <property type="nucleotide sequence ID" value="NC_009997.1"/>
</dbReference>
<dbReference type="SMR" id="A9KY80"/>
<dbReference type="GeneID" id="11772034"/>
<dbReference type="KEGG" id="sbn:Sbal195_1815"/>
<dbReference type="HOGENOM" id="CLU_017584_9_4_6"/>
<dbReference type="Proteomes" id="UP000000770">
    <property type="component" value="Chromosome"/>
</dbReference>
<dbReference type="GO" id="GO:0005737">
    <property type="term" value="C:cytoplasm"/>
    <property type="evidence" value="ECO:0007669"/>
    <property type="project" value="UniProtKB-SubCell"/>
</dbReference>
<dbReference type="GO" id="GO:0003677">
    <property type="term" value="F:DNA binding"/>
    <property type="evidence" value="ECO:0007669"/>
    <property type="project" value="UniProtKB-KW"/>
</dbReference>
<dbReference type="GO" id="GO:0003700">
    <property type="term" value="F:DNA-binding transcription factor activity"/>
    <property type="evidence" value="ECO:0007669"/>
    <property type="project" value="UniProtKB-UniRule"/>
</dbReference>
<dbReference type="GO" id="GO:0000062">
    <property type="term" value="F:fatty-acyl-CoA binding"/>
    <property type="evidence" value="ECO:0007669"/>
    <property type="project" value="InterPro"/>
</dbReference>
<dbReference type="GO" id="GO:0006631">
    <property type="term" value="P:fatty acid metabolic process"/>
    <property type="evidence" value="ECO:0007669"/>
    <property type="project" value="UniProtKB-KW"/>
</dbReference>
<dbReference type="GO" id="GO:0019217">
    <property type="term" value="P:regulation of fatty acid metabolic process"/>
    <property type="evidence" value="ECO:0007669"/>
    <property type="project" value="UniProtKB-UniRule"/>
</dbReference>
<dbReference type="CDD" id="cd07377">
    <property type="entry name" value="WHTH_GntR"/>
    <property type="match status" value="1"/>
</dbReference>
<dbReference type="Gene3D" id="1.20.120.530">
    <property type="entry name" value="GntR ligand-binding domain-like"/>
    <property type="match status" value="1"/>
</dbReference>
<dbReference type="Gene3D" id="1.10.10.10">
    <property type="entry name" value="Winged helix-like DNA-binding domain superfamily/Winged helix DNA-binding domain"/>
    <property type="match status" value="1"/>
</dbReference>
<dbReference type="HAMAP" id="MF_00696">
    <property type="entry name" value="HTH_FadR"/>
    <property type="match status" value="1"/>
</dbReference>
<dbReference type="InterPro" id="IPR014178">
    <property type="entry name" value="FA-response_TF_FadR"/>
</dbReference>
<dbReference type="InterPro" id="IPR028374">
    <property type="entry name" value="FadR_C"/>
</dbReference>
<dbReference type="InterPro" id="IPR008920">
    <property type="entry name" value="TF_FadR/GntR_C"/>
</dbReference>
<dbReference type="InterPro" id="IPR000524">
    <property type="entry name" value="Tscrpt_reg_HTH_GntR"/>
</dbReference>
<dbReference type="InterPro" id="IPR036388">
    <property type="entry name" value="WH-like_DNA-bd_sf"/>
</dbReference>
<dbReference type="InterPro" id="IPR036390">
    <property type="entry name" value="WH_DNA-bd_sf"/>
</dbReference>
<dbReference type="NCBIfam" id="TIGR02812">
    <property type="entry name" value="fadR_gamma"/>
    <property type="match status" value="1"/>
</dbReference>
<dbReference type="NCBIfam" id="NF003444">
    <property type="entry name" value="PRK04984.1"/>
    <property type="match status" value="1"/>
</dbReference>
<dbReference type="PANTHER" id="PTHR43537:SF52">
    <property type="entry name" value="FATTY ACID METABOLISM REGULATOR PROTEIN"/>
    <property type="match status" value="1"/>
</dbReference>
<dbReference type="PANTHER" id="PTHR43537">
    <property type="entry name" value="TRANSCRIPTIONAL REGULATOR, GNTR FAMILY"/>
    <property type="match status" value="1"/>
</dbReference>
<dbReference type="Pfam" id="PF07840">
    <property type="entry name" value="FadR_C"/>
    <property type="match status" value="1"/>
</dbReference>
<dbReference type="Pfam" id="PF00392">
    <property type="entry name" value="GntR"/>
    <property type="match status" value="1"/>
</dbReference>
<dbReference type="PRINTS" id="PR00035">
    <property type="entry name" value="HTHGNTR"/>
</dbReference>
<dbReference type="SMART" id="SM00345">
    <property type="entry name" value="HTH_GNTR"/>
    <property type="match status" value="1"/>
</dbReference>
<dbReference type="SUPFAM" id="SSF48008">
    <property type="entry name" value="GntR ligand-binding domain-like"/>
    <property type="match status" value="1"/>
</dbReference>
<dbReference type="SUPFAM" id="SSF46785">
    <property type="entry name" value="Winged helix' DNA-binding domain"/>
    <property type="match status" value="1"/>
</dbReference>
<dbReference type="PROSITE" id="PS50949">
    <property type="entry name" value="HTH_GNTR"/>
    <property type="match status" value="1"/>
</dbReference>
<accession>A9KY80</accession>
<protein>
    <recommendedName>
        <fullName evidence="1">Fatty acid metabolism regulator protein</fullName>
    </recommendedName>
</protein>
<organism>
    <name type="scientific">Shewanella baltica (strain OS195)</name>
    <dbReference type="NCBI Taxonomy" id="399599"/>
    <lineage>
        <taxon>Bacteria</taxon>
        <taxon>Pseudomonadati</taxon>
        <taxon>Pseudomonadota</taxon>
        <taxon>Gammaproteobacteria</taxon>
        <taxon>Alteromonadales</taxon>
        <taxon>Shewanellaceae</taxon>
        <taxon>Shewanella</taxon>
    </lineage>
</organism>
<reference key="1">
    <citation type="submission" date="2007-11" db="EMBL/GenBank/DDBJ databases">
        <title>Complete sequence of chromosome of Shewanella baltica OS195.</title>
        <authorList>
            <consortium name="US DOE Joint Genome Institute"/>
            <person name="Copeland A."/>
            <person name="Lucas S."/>
            <person name="Lapidus A."/>
            <person name="Barry K."/>
            <person name="Glavina del Rio T."/>
            <person name="Dalin E."/>
            <person name="Tice H."/>
            <person name="Pitluck S."/>
            <person name="Chain P."/>
            <person name="Malfatti S."/>
            <person name="Shin M."/>
            <person name="Vergez L."/>
            <person name="Schmutz J."/>
            <person name="Larimer F."/>
            <person name="Land M."/>
            <person name="Hauser L."/>
            <person name="Kyrpides N."/>
            <person name="Kim E."/>
            <person name="Brettar I."/>
            <person name="Rodrigues J."/>
            <person name="Konstantinidis K."/>
            <person name="Klappenbach J."/>
            <person name="Hofle M."/>
            <person name="Tiedje J."/>
            <person name="Richardson P."/>
        </authorList>
    </citation>
    <scope>NUCLEOTIDE SEQUENCE [LARGE SCALE GENOMIC DNA]</scope>
    <source>
        <strain>OS195</strain>
    </source>
</reference>
<sequence>MIINAKGPASFAEKYIVRSIWDNKFPPGSILPAERELSELIGVTRTTLREVLQRLARDGWLKIQHGKPTRVNNFWETSGLNILETIADLNPEGFPVLVDQLLSARTNVSAIYFRGALRYNPDTAVDVLAKIHQLEDTAESYAEFDYLLHHTLAFSSGNPLYVLILNGFKGLYSRVGRYYFTSSDARLLALNFYKELELLAQAKNYLDVPALMRTYGMNSGKMWLQLRDDMPASIAQDN</sequence>